<keyword id="KW-0028">Amino-acid biosynthesis</keyword>
<keyword id="KW-0055">Arginine biosynthesis</keyword>
<keyword id="KW-0963">Cytoplasm</keyword>
<keyword id="KW-0521">NADP</keyword>
<keyword id="KW-0560">Oxidoreductase</keyword>
<gene>
    <name evidence="1" type="primary">argC</name>
    <name type="ordered locus">Pmen_3933</name>
</gene>
<dbReference type="EC" id="1.2.1.38" evidence="1"/>
<dbReference type="EMBL" id="CP000680">
    <property type="protein sequence ID" value="ABP86680.1"/>
    <property type="molecule type" value="Genomic_DNA"/>
</dbReference>
<dbReference type="SMR" id="A4XZB4"/>
<dbReference type="STRING" id="399739.Pmen_3933"/>
<dbReference type="KEGG" id="pmy:Pmen_3933"/>
<dbReference type="PATRIC" id="fig|399739.8.peg.3986"/>
<dbReference type="eggNOG" id="COG0002">
    <property type="taxonomic scope" value="Bacteria"/>
</dbReference>
<dbReference type="HOGENOM" id="CLU_006384_0_1_6"/>
<dbReference type="OrthoDB" id="9801289at2"/>
<dbReference type="UniPathway" id="UPA00068">
    <property type="reaction ID" value="UER00108"/>
</dbReference>
<dbReference type="GO" id="GO:0005737">
    <property type="term" value="C:cytoplasm"/>
    <property type="evidence" value="ECO:0007669"/>
    <property type="project" value="UniProtKB-SubCell"/>
</dbReference>
<dbReference type="GO" id="GO:0003942">
    <property type="term" value="F:N-acetyl-gamma-glutamyl-phosphate reductase activity"/>
    <property type="evidence" value="ECO:0007669"/>
    <property type="project" value="UniProtKB-UniRule"/>
</dbReference>
<dbReference type="GO" id="GO:0051287">
    <property type="term" value="F:NAD binding"/>
    <property type="evidence" value="ECO:0007669"/>
    <property type="project" value="InterPro"/>
</dbReference>
<dbReference type="GO" id="GO:0070401">
    <property type="term" value="F:NADP+ binding"/>
    <property type="evidence" value="ECO:0007669"/>
    <property type="project" value="InterPro"/>
</dbReference>
<dbReference type="GO" id="GO:0006526">
    <property type="term" value="P:L-arginine biosynthetic process"/>
    <property type="evidence" value="ECO:0007669"/>
    <property type="project" value="UniProtKB-UniRule"/>
</dbReference>
<dbReference type="CDD" id="cd23934">
    <property type="entry name" value="AGPR_1_C"/>
    <property type="match status" value="1"/>
</dbReference>
<dbReference type="CDD" id="cd17895">
    <property type="entry name" value="AGPR_1_N"/>
    <property type="match status" value="1"/>
</dbReference>
<dbReference type="FunFam" id="3.30.360.10:FF:000014">
    <property type="entry name" value="N-acetyl-gamma-glutamyl-phosphate reductase"/>
    <property type="match status" value="1"/>
</dbReference>
<dbReference type="Gene3D" id="3.30.360.10">
    <property type="entry name" value="Dihydrodipicolinate Reductase, domain 2"/>
    <property type="match status" value="1"/>
</dbReference>
<dbReference type="Gene3D" id="3.40.50.720">
    <property type="entry name" value="NAD(P)-binding Rossmann-like Domain"/>
    <property type="match status" value="1"/>
</dbReference>
<dbReference type="HAMAP" id="MF_00150">
    <property type="entry name" value="ArgC_type1"/>
    <property type="match status" value="1"/>
</dbReference>
<dbReference type="InterPro" id="IPR023013">
    <property type="entry name" value="AGPR_AS"/>
</dbReference>
<dbReference type="InterPro" id="IPR000706">
    <property type="entry name" value="AGPR_type-1"/>
</dbReference>
<dbReference type="InterPro" id="IPR036291">
    <property type="entry name" value="NAD(P)-bd_dom_sf"/>
</dbReference>
<dbReference type="InterPro" id="IPR050085">
    <property type="entry name" value="NAGSA_dehydrogenase"/>
</dbReference>
<dbReference type="InterPro" id="IPR000534">
    <property type="entry name" value="Semialdehyde_DH_NAD-bd"/>
</dbReference>
<dbReference type="NCBIfam" id="TIGR01850">
    <property type="entry name" value="argC"/>
    <property type="match status" value="1"/>
</dbReference>
<dbReference type="PANTHER" id="PTHR32338:SF10">
    <property type="entry name" value="N-ACETYL-GAMMA-GLUTAMYL-PHOSPHATE REDUCTASE, CHLOROPLASTIC-RELATED"/>
    <property type="match status" value="1"/>
</dbReference>
<dbReference type="PANTHER" id="PTHR32338">
    <property type="entry name" value="N-ACETYL-GAMMA-GLUTAMYL-PHOSPHATE REDUCTASE, CHLOROPLASTIC-RELATED-RELATED"/>
    <property type="match status" value="1"/>
</dbReference>
<dbReference type="Pfam" id="PF01118">
    <property type="entry name" value="Semialdhyde_dh"/>
    <property type="match status" value="1"/>
</dbReference>
<dbReference type="Pfam" id="PF22698">
    <property type="entry name" value="Semialdhyde_dhC_1"/>
    <property type="match status" value="1"/>
</dbReference>
<dbReference type="SMART" id="SM00859">
    <property type="entry name" value="Semialdhyde_dh"/>
    <property type="match status" value="1"/>
</dbReference>
<dbReference type="SUPFAM" id="SSF55347">
    <property type="entry name" value="Glyceraldehyde-3-phosphate dehydrogenase-like, C-terminal domain"/>
    <property type="match status" value="1"/>
</dbReference>
<dbReference type="SUPFAM" id="SSF51735">
    <property type="entry name" value="NAD(P)-binding Rossmann-fold domains"/>
    <property type="match status" value="1"/>
</dbReference>
<dbReference type="PROSITE" id="PS01224">
    <property type="entry name" value="ARGC"/>
    <property type="match status" value="1"/>
</dbReference>
<comment type="function">
    <text evidence="1">Catalyzes the NADPH-dependent reduction of N-acetyl-5-glutamyl phosphate to yield N-acetyl-L-glutamate 5-semialdehyde.</text>
</comment>
<comment type="catalytic activity">
    <reaction evidence="1">
        <text>N-acetyl-L-glutamate 5-semialdehyde + phosphate + NADP(+) = N-acetyl-L-glutamyl 5-phosphate + NADPH + H(+)</text>
        <dbReference type="Rhea" id="RHEA:21588"/>
        <dbReference type="ChEBI" id="CHEBI:15378"/>
        <dbReference type="ChEBI" id="CHEBI:29123"/>
        <dbReference type="ChEBI" id="CHEBI:43474"/>
        <dbReference type="ChEBI" id="CHEBI:57783"/>
        <dbReference type="ChEBI" id="CHEBI:57936"/>
        <dbReference type="ChEBI" id="CHEBI:58349"/>
        <dbReference type="EC" id="1.2.1.38"/>
    </reaction>
</comment>
<comment type="pathway">
    <text evidence="1">Amino-acid biosynthesis; L-arginine biosynthesis; N(2)-acetyl-L-ornithine from L-glutamate: step 3/4.</text>
</comment>
<comment type="subcellular location">
    <subcellularLocation>
        <location evidence="1">Cytoplasm</location>
    </subcellularLocation>
</comment>
<comment type="similarity">
    <text evidence="1">Belongs to the NAGSA dehydrogenase family. Type 1 subfamily.</text>
</comment>
<protein>
    <recommendedName>
        <fullName evidence="1">N-acetyl-gamma-glutamyl-phosphate reductase</fullName>
        <shortName evidence="1">AGPR</shortName>
        <ecNumber evidence="1">1.2.1.38</ecNumber>
    </recommendedName>
    <alternativeName>
        <fullName evidence="1">N-acetyl-glutamate semialdehyde dehydrogenase</fullName>
        <shortName evidence="1">NAGSA dehydrogenase</shortName>
    </alternativeName>
</protein>
<evidence type="ECO:0000255" key="1">
    <source>
        <dbReference type="HAMAP-Rule" id="MF_00150"/>
    </source>
</evidence>
<accession>A4XZB4</accession>
<feature type="chain" id="PRO_1000011042" description="N-acetyl-gamma-glutamyl-phosphate reductase">
    <location>
        <begin position="1"/>
        <end position="344"/>
    </location>
</feature>
<feature type="active site" evidence="1">
    <location>
        <position position="150"/>
    </location>
</feature>
<name>ARGC_ECTM1</name>
<sequence>MIKVGIVGGTGYTGVELLRLLAQHPQAEVAVITSRSEAGLRVDEMYPNLRGHYPELAFSVPDVATLGACDVVFFATPHGVAHALAGELLAAGTRVIDLSADFRLQDAEEWAKWYGQPHGAPELLSEAVYGLPEVNREAIKTARLIAVPGCYPTATQLGLIPLLEAGLADAGSLIADCKSGVSGAGRGASVGSLFCEAGESMKAYSVKGHRHLPEIRQGLRLAAGGDVGLTFVPHLTPMIRGIHATLYARVTDTSVDLQALFEQRYANEPFVDVMPAGSHPETRSVRGGNVCRIAVHRPQGGDLVVVLSVIDNLVKGASGQAVQNMNILFGLDERLGLSHAALLP</sequence>
<proteinExistence type="inferred from homology"/>
<reference key="1">
    <citation type="submission" date="2007-04" db="EMBL/GenBank/DDBJ databases">
        <title>Complete sequence of Pseudomonas mendocina ymp.</title>
        <authorList>
            <consortium name="US DOE Joint Genome Institute"/>
            <person name="Copeland A."/>
            <person name="Lucas S."/>
            <person name="Lapidus A."/>
            <person name="Barry K."/>
            <person name="Glavina del Rio T."/>
            <person name="Dalin E."/>
            <person name="Tice H."/>
            <person name="Pitluck S."/>
            <person name="Kiss H."/>
            <person name="Brettin T."/>
            <person name="Detter J.C."/>
            <person name="Bruce D."/>
            <person name="Han C."/>
            <person name="Schmutz J."/>
            <person name="Larimer F."/>
            <person name="Land M."/>
            <person name="Hauser L."/>
            <person name="Kyrpides N."/>
            <person name="Mikhailova N."/>
            <person name="Hersman L."/>
            <person name="Dubois J."/>
            <person name="Maurice P."/>
            <person name="Richardson P."/>
        </authorList>
    </citation>
    <scope>NUCLEOTIDE SEQUENCE [LARGE SCALE GENOMIC DNA]</scope>
    <source>
        <strain>ymp</strain>
    </source>
</reference>
<organism>
    <name type="scientific">Ectopseudomonas mendocina (strain ymp)</name>
    <name type="common">Pseudomonas mendocina</name>
    <dbReference type="NCBI Taxonomy" id="399739"/>
    <lineage>
        <taxon>Bacteria</taxon>
        <taxon>Pseudomonadati</taxon>
        <taxon>Pseudomonadota</taxon>
        <taxon>Gammaproteobacteria</taxon>
        <taxon>Pseudomonadales</taxon>
        <taxon>Pseudomonadaceae</taxon>
        <taxon>Ectopseudomonas</taxon>
    </lineage>
</organism>